<sequence>MKDSVIRKLEGLLERNEEVLALLSDAGVIADQERFRALSKEYSQLEDVVSTFKSFQQAEEDLESAKEMMEEDDPELKEMAQEEYKVAKSAIAALEDELQILLLPKDPNDDNNCFIEIRAGAGGDEAAIFAGDLFRMYSRYAESKRWQIEVMNTNEGEHGGFKEVIAKISGEGVYGKLKFESGGHRVQRVPETESQGRVHTSACTVIVLPEVPEAEAIEINKADLKVDTFRASGAGGQHVNKTDSAIRITHIPTGIVVECQDQRSQHKNRAQAMSVLAARIQAVEDEKRRSAEESTRRNLVSSGDRSERIRTYNFPQGRVSEHRINLTLYRLGEFMEGDIDCVVEPLIQENQADMLAALGEG</sequence>
<evidence type="ECO:0000255" key="1">
    <source>
        <dbReference type="HAMAP-Rule" id="MF_00093"/>
    </source>
</evidence>
<evidence type="ECO:0000256" key="2">
    <source>
        <dbReference type="SAM" id="MobiDB-lite"/>
    </source>
</evidence>
<accession>A8H7A5</accession>
<name>RF1_SHEPA</name>
<proteinExistence type="inferred from homology"/>
<protein>
    <recommendedName>
        <fullName evidence="1">Peptide chain release factor 1</fullName>
        <shortName evidence="1">RF-1</shortName>
    </recommendedName>
</protein>
<feature type="chain" id="PRO_1000075516" description="Peptide chain release factor 1">
    <location>
        <begin position="1"/>
        <end position="361"/>
    </location>
</feature>
<feature type="region of interest" description="Disordered" evidence="2">
    <location>
        <begin position="286"/>
        <end position="305"/>
    </location>
</feature>
<feature type="compositionally biased region" description="Basic and acidic residues" evidence="2">
    <location>
        <begin position="286"/>
        <end position="296"/>
    </location>
</feature>
<feature type="modified residue" description="N5-methylglutamine" evidence="1">
    <location>
        <position position="237"/>
    </location>
</feature>
<gene>
    <name evidence="1" type="primary">prfA</name>
    <name type="ordered locus">Spea_3126</name>
</gene>
<comment type="function">
    <text evidence="1">Peptide chain release factor 1 directs the termination of translation in response to the peptide chain termination codons UAG and UAA.</text>
</comment>
<comment type="subcellular location">
    <subcellularLocation>
        <location evidence="1">Cytoplasm</location>
    </subcellularLocation>
</comment>
<comment type="PTM">
    <text evidence="1">Methylated by PrmC. Methylation increases the termination efficiency of RF1.</text>
</comment>
<comment type="similarity">
    <text evidence="1">Belongs to the prokaryotic/mitochondrial release factor family.</text>
</comment>
<dbReference type="EMBL" id="CP000851">
    <property type="protein sequence ID" value="ABV88442.1"/>
    <property type="molecule type" value="Genomic_DNA"/>
</dbReference>
<dbReference type="RefSeq" id="WP_012156344.1">
    <property type="nucleotide sequence ID" value="NC_009901.1"/>
</dbReference>
<dbReference type="SMR" id="A8H7A5"/>
<dbReference type="STRING" id="398579.Spea_3126"/>
<dbReference type="KEGG" id="spl:Spea_3126"/>
<dbReference type="eggNOG" id="COG0216">
    <property type="taxonomic scope" value="Bacteria"/>
</dbReference>
<dbReference type="HOGENOM" id="CLU_036856_0_1_6"/>
<dbReference type="OrthoDB" id="9806673at2"/>
<dbReference type="Proteomes" id="UP000002608">
    <property type="component" value="Chromosome"/>
</dbReference>
<dbReference type="GO" id="GO:0005737">
    <property type="term" value="C:cytoplasm"/>
    <property type="evidence" value="ECO:0007669"/>
    <property type="project" value="UniProtKB-SubCell"/>
</dbReference>
<dbReference type="GO" id="GO:0016149">
    <property type="term" value="F:translation release factor activity, codon specific"/>
    <property type="evidence" value="ECO:0007669"/>
    <property type="project" value="UniProtKB-UniRule"/>
</dbReference>
<dbReference type="FunFam" id="3.30.160.20:FF:000004">
    <property type="entry name" value="Peptide chain release factor 1"/>
    <property type="match status" value="1"/>
</dbReference>
<dbReference type="FunFam" id="3.30.70.1660:FF:000002">
    <property type="entry name" value="Peptide chain release factor 1"/>
    <property type="match status" value="1"/>
</dbReference>
<dbReference type="FunFam" id="3.30.70.1660:FF:000004">
    <property type="entry name" value="Peptide chain release factor 1"/>
    <property type="match status" value="1"/>
</dbReference>
<dbReference type="Gene3D" id="3.30.160.20">
    <property type="match status" value="1"/>
</dbReference>
<dbReference type="Gene3D" id="3.30.70.1660">
    <property type="match status" value="1"/>
</dbReference>
<dbReference type="Gene3D" id="6.10.140.1950">
    <property type="match status" value="1"/>
</dbReference>
<dbReference type="HAMAP" id="MF_00093">
    <property type="entry name" value="Rel_fac_1"/>
    <property type="match status" value="1"/>
</dbReference>
<dbReference type="InterPro" id="IPR005139">
    <property type="entry name" value="PCRF"/>
</dbReference>
<dbReference type="InterPro" id="IPR000352">
    <property type="entry name" value="Pep_chain_release_fac_I"/>
</dbReference>
<dbReference type="InterPro" id="IPR045853">
    <property type="entry name" value="Pep_chain_release_fac_I_sf"/>
</dbReference>
<dbReference type="InterPro" id="IPR050057">
    <property type="entry name" value="Prokaryotic/Mito_RF"/>
</dbReference>
<dbReference type="InterPro" id="IPR004373">
    <property type="entry name" value="RF-1"/>
</dbReference>
<dbReference type="NCBIfam" id="TIGR00019">
    <property type="entry name" value="prfA"/>
    <property type="match status" value="1"/>
</dbReference>
<dbReference type="NCBIfam" id="NF001859">
    <property type="entry name" value="PRK00591.1"/>
    <property type="match status" value="1"/>
</dbReference>
<dbReference type="PANTHER" id="PTHR43804">
    <property type="entry name" value="LD18447P"/>
    <property type="match status" value="1"/>
</dbReference>
<dbReference type="PANTHER" id="PTHR43804:SF7">
    <property type="entry name" value="LD18447P"/>
    <property type="match status" value="1"/>
</dbReference>
<dbReference type="Pfam" id="PF03462">
    <property type="entry name" value="PCRF"/>
    <property type="match status" value="1"/>
</dbReference>
<dbReference type="Pfam" id="PF00472">
    <property type="entry name" value="RF-1"/>
    <property type="match status" value="1"/>
</dbReference>
<dbReference type="SMART" id="SM00937">
    <property type="entry name" value="PCRF"/>
    <property type="match status" value="1"/>
</dbReference>
<dbReference type="SUPFAM" id="SSF75620">
    <property type="entry name" value="Release factor"/>
    <property type="match status" value="1"/>
</dbReference>
<dbReference type="PROSITE" id="PS00745">
    <property type="entry name" value="RF_PROK_I"/>
    <property type="match status" value="1"/>
</dbReference>
<keyword id="KW-0963">Cytoplasm</keyword>
<keyword id="KW-0488">Methylation</keyword>
<keyword id="KW-0648">Protein biosynthesis</keyword>
<keyword id="KW-1185">Reference proteome</keyword>
<organism>
    <name type="scientific">Shewanella pealeana (strain ATCC 700345 / ANG-SQ1)</name>
    <dbReference type="NCBI Taxonomy" id="398579"/>
    <lineage>
        <taxon>Bacteria</taxon>
        <taxon>Pseudomonadati</taxon>
        <taxon>Pseudomonadota</taxon>
        <taxon>Gammaproteobacteria</taxon>
        <taxon>Alteromonadales</taxon>
        <taxon>Shewanellaceae</taxon>
        <taxon>Shewanella</taxon>
    </lineage>
</organism>
<reference key="1">
    <citation type="submission" date="2007-10" db="EMBL/GenBank/DDBJ databases">
        <title>Complete sequence of Shewanella pealeana ATCC 700345.</title>
        <authorList>
            <consortium name="US DOE Joint Genome Institute"/>
            <person name="Copeland A."/>
            <person name="Lucas S."/>
            <person name="Lapidus A."/>
            <person name="Barry K."/>
            <person name="Glavina del Rio T."/>
            <person name="Dalin E."/>
            <person name="Tice H."/>
            <person name="Pitluck S."/>
            <person name="Chertkov O."/>
            <person name="Brettin T."/>
            <person name="Bruce D."/>
            <person name="Detter J.C."/>
            <person name="Han C."/>
            <person name="Schmutz J."/>
            <person name="Larimer F."/>
            <person name="Land M."/>
            <person name="Hauser L."/>
            <person name="Kyrpides N."/>
            <person name="Kim E."/>
            <person name="Zhao J.-S.Z."/>
            <person name="Manno D."/>
            <person name="Hawari J."/>
            <person name="Richardson P."/>
        </authorList>
    </citation>
    <scope>NUCLEOTIDE SEQUENCE [LARGE SCALE GENOMIC DNA]</scope>
    <source>
        <strain>ATCC 700345 / ANG-SQ1</strain>
    </source>
</reference>